<accession>A1CXG2</accession>
<name>RCF1_NEOFI</name>
<protein>
    <recommendedName>
        <fullName>Respiratory supercomplex factor 1, mitochondrial</fullName>
    </recommendedName>
</protein>
<keyword id="KW-0175">Coiled coil</keyword>
<keyword id="KW-0472">Membrane</keyword>
<keyword id="KW-0496">Mitochondrion</keyword>
<keyword id="KW-1185">Reference proteome</keyword>
<keyword id="KW-0812">Transmembrane</keyword>
<keyword id="KW-1133">Transmembrane helix</keyword>
<proteinExistence type="inferred from homology"/>
<reference key="1">
    <citation type="journal article" date="2008" name="PLoS Genet.">
        <title>Genomic islands in the pathogenic filamentous fungus Aspergillus fumigatus.</title>
        <authorList>
            <person name="Fedorova N.D."/>
            <person name="Khaldi N."/>
            <person name="Joardar V.S."/>
            <person name="Maiti R."/>
            <person name="Amedeo P."/>
            <person name="Anderson M.J."/>
            <person name="Crabtree J."/>
            <person name="Silva J.C."/>
            <person name="Badger J.H."/>
            <person name="Albarraq A."/>
            <person name="Angiuoli S."/>
            <person name="Bussey H."/>
            <person name="Bowyer P."/>
            <person name="Cotty P.J."/>
            <person name="Dyer P.S."/>
            <person name="Egan A."/>
            <person name="Galens K."/>
            <person name="Fraser-Liggett C.M."/>
            <person name="Haas B.J."/>
            <person name="Inman J.M."/>
            <person name="Kent R."/>
            <person name="Lemieux S."/>
            <person name="Malavazi I."/>
            <person name="Orvis J."/>
            <person name="Roemer T."/>
            <person name="Ronning C.M."/>
            <person name="Sundaram J.P."/>
            <person name="Sutton G."/>
            <person name="Turner G."/>
            <person name="Venter J.C."/>
            <person name="White O.R."/>
            <person name="Whitty B.R."/>
            <person name="Youngman P."/>
            <person name="Wolfe K.H."/>
            <person name="Goldman G.H."/>
            <person name="Wortman J.R."/>
            <person name="Jiang B."/>
            <person name="Denning D.W."/>
            <person name="Nierman W.C."/>
        </authorList>
    </citation>
    <scope>NUCLEOTIDE SEQUENCE [LARGE SCALE GENOMIC DNA]</scope>
    <source>
        <strain>ATCC 1020 / DSM 3700 / CBS 544.65 / FGSC A1164 / JCM 1740 / NRRL 181 / WB 181</strain>
    </source>
</reference>
<feature type="chain" id="PRO_0000399641" description="Respiratory supercomplex factor 1, mitochondrial">
    <location>
        <begin position="1"/>
        <end position="181"/>
    </location>
</feature>
<feature type="transmembrane region" description="Helical" evidence="2">
    <location>
        <begin position="33"/>
        <end position="49"/>
    </location>
</feature>
<feature type="transmembrane region" description="Helical" evidence="2">
    <location>
        <begin position="69"/>
        <end position="86"/>
    </location>
</feature>
<feature type="domain" description="HIG1" evidence="2">
    <location>
        <begin position="6"/>
        <end position="97"/>
    </location>
</feature>
<feature type="region of interest" description="Disordered" evidence="3">
    <location>
        <begin position="136"/>
        <end position="160"/>
    </location>
</feature>
<dbReference type="EMBL" id="DS027685">
    <property type="protein sequence ID" value="EAW25314.1"/>
    <property type="molecule type" value="Genomic_DNA"/>
</dbReference>
<dbReference type="RefSeq" id="XP_001267211.1">
    <property type="nucleotide sequence ID" value="XM_001267210.1"/>
</dbReference>
<dbReference type="SMR" id="A1CXG2"/>
<dbReference type="STRING" id="331117.A1CXG2"/>
<dbReference type="EnsemblFungi" id="EAW25314">
    <property type="protein sequence ID" value="EAW25314"/>
    <property type="gene ID" value="NFIA_108070"/>
</dbReference>
<dbReference type="GeneID" id="4593306"/>
<dbReference type="KEGG" id="nfi:NFIA_108070"/>
<dbReference type="VEuPathDB" id="FungiDB:NFIA_108070"/>
<dbReference type="eggNOG" id="KOG4431">
    <property type="taxonomic scope" value="Eukaryota"/>
</dbReference>
<dbReference type="HOGENOM" id="CLU_087356_0_2_1"/>
<dbReference type="OMA" id="QRWIREL"/>
<dbReference type="OrthoDB" id="6604018at2759"/>
<dbReference type="Proteomes" id="UP000006702">
    <property type="component" value="Unassembled WGS sequence"/>
</dbReference>
<dbReference type="GO" id="GO:0031966">
    <property type="term" value="C:mitochondrial membrane"/>
    <property type="evidence" value="ECO:0007669"/>
    <property type="project" value="UniProtKB-SubCell"/>
</dbReference>
<dbReference type="GO" id="GO:0097250">
    <property type="term" value="P:mitochondrial respirasome assembly"/>
    <property type="evidence" value="ECO:0007669"/>
    <property type="project" value="TreeGrafter"/>
</dbReference>
<dbReference type="Gene3D" id="6.10.140.1320">
    <property type="match status" value="1"/>
</dbReference>
<dbReference type="InterPro" id="IPR007667">
    <property type="entry name" value="Hypoxia_induced_domain"/>
</dbReference>
<dbReference type="InterPro" id="IPR050355">
    <property type="entry name" value="RCF1"/>
</dbReference>
<dbReference type="PANTHER" id="PTHR12297:SF3">
    <property type="entry name" value="HIG1 DOMAIN FAMILY MEMBER 1A"/>
    <property type="match status" value="1"/>
</dbReference>
<dbReference type="PANTHER" id="PTHR12297">
    <property type="entry name" value="HYPOXIA-INDUCBILE GENE 1 HIG1 -RELATED"/>
    <property type="match status" value="1"/>
</dbReference>
<dbReference type="Pfam" id="PF04588">
    <property type="entry name" value="HIG_1_N"/>
    <property type="match status" value="1"/>
</dbReference>
<dbReference type="PROSITE" id="PS51503">
    <property type="entry name" value="HIG1"/>
    <property type="match status" value="1"/>
</dbReference>
<organism>
    <name type="scientific">Neosartorya fischeri (strain ATCC 1020 / DSM 3700 / CBS 544.65 / FGSC A1164 / JCM 1740 / NRRL 181 / WB 181)</name>
    <name type="common">Aspergillus fischerianus</name>
    <dbReference type="NCBI Taxonomy" id="331117"/>
    <lineage>
        <taxon>Eukaryota</taxon>
        <taxon>Fungi</taxon>
        <taxon>Dikarya</taxon>
        <taxon>Ascomycota</taxon>
        <taxon>Pezizomycotina</taxon>
        <taxon>Eurotiomycetes</taxon>
        <taxon>Eurotiomycetidae</taxon>
        <taxon>Eurotiales</taxon>
        <taxon>Aspergillaceae</taxon>
        <taxon>Aspergillus</taxon>
        <taxon>Aspergillus subgen. Fumigati</taxon>
    </lineage>
</organism>
<evidence type="ECO:0000250" key="1"/>
<evidence type="ECO:0000255" key="2">
    <source>
        <dbReference type="PROSITE-ProRule" id="PRU00836"/>
    </source>
</evidence>
<evidence type="ECO:0000256" key="3">
    <source>
        <dbReference type="SAM" id="MobiDB-lite"/>
    </source>
</evidence>
<evidence type="ECO:0000305" key="4"/>
<gene>
    <name type="primary">rcf1</name>
    <name type="synonym">aim31</name>
    <name type="ORF">NFIA_108070</name>
</gene>
<comment type="function">
    <text evidence="1">Cytochrome c oxidase subunit which plays a role in assembly of respiratory supercomplexes.</text>
</comment>
<comment type="subunit">
    <text evidence="1">Associates with the respiratory chain complex III/complex IV supercomplex.</text>
</comment>
<comment type="subcellular location">
    <subcellularLocation>
        <location evidence="2">Mitochondrion membrane</location>
        <topology evidence="2">Multi-pass membrane protein</topology>
    </subcellularLocation>
</comment>
<comment type="similarity">
    <text evidence="4">Belongs to the RCF1 family.</text>
</comment>
<sequence>MLNEPLPSSMEDNPQFKEETSLQKFRRRLKEEPLIPLGCAATCYALYRAYRSMKAGDSVEMNKMFRARIYAQFFTLVAVVAGGMYFKTERQQRREFEKMVEQRKAQEKRDAWLRELEIRDKEDKDWRERHAAIEAAAKEAGKRPAPNKIPEQDAARSAIEPADEKSIGVLAAVRDLWMQQK</sequence>